<organism>
    <name type="scientific">Mycobacterium bovis (strain ATCC BAA-935 / AF2122/97)</name>
    <dbReference type="NCBI Taxonomy" id="233413"/>
    <lineage>
        <taxon>Bacteria</taxon>
        <taxon>Bacillati</taxon>
        <taxon>Actinomycetota</taxon>
        <taxon>Actinomycetes</taxon>
        <taxon>Mycobacteriales</taxon>
        <taxon>Mycobacteriaceae</taxon>
        <taxon>Mycobacterium</taxon>
        <taxon>Mycobacterium tuberculosis complex</taxon>
    </lineage>
</organism>
<feature type="chain" id="PRO_0000152043" description="Leucine--tRNA ligase">
    <location>
        <begin position="1"/>
        <end position="969"/>
    </location>
</feature>
<feature type="short sequence motif" description="'HIGH' region">
    <location>
        <begin position="78"/>
        <end position="89"/>
    </location>
</feature>
<feature type="short sequence motif" description="'KMSKS' region">
    <location>
        <begin position="739"/>
        <end position="743"/>
    </location>
</feature>
<feature type="binding site" evidence="1">
    <location>
        <position position="742"/>
    </location>
    <ligand>
        <name>ATP</name>
        <dbReference type="ChEBI" id="CHEBI:30616"/>
    </ligand>
</feature>
<gene>
    <name evidence="1" type="primary">leuS</name>
    <name type="ordered locus">BQ2027_MB0042</name>
</gene>
<keyword id="KW-0030">Aminoacyl-tRNA synthetase</keyword>
<keyword id="KW-0067">ATP-binding</keyword>
<keyword id="KW-0963">Cytoplasm</keyword>
<keyword id="KW-0436">Ligase</keyword>
<keyword id="KW-0547">Nucleotide-binding</keyword>
<keyword id="KW-0648">Protein biosynthesis</keyword>
<keyword id="KW-1185">Reference proteome</keyword>
<comment type="catalytic activity">
    <reaction evidence="1">
        <text>tRNA(Leu) + L-leucine + ATP = L-leucyl-tRNA(Leu) + AMP + diphosphate</text>
        <dbReference type="Rhea" id="RHEA:11688"/>
        <dbReference type="Rhea" id="RHEA-COMP:9613"/>
        <dbReference type="Rhea" id="RHEA-COMP:9622"/>
        <dbReference type="ChEBI" id="CHEBI:30616"/>
        <dbReference type="ChEBI" id="CHEBI:33019"/>
        <dbReference type="ChEBI" id="CHEBI:57427"/>
        <dbReference type="ChEBI" id="CHEBI:78442"/>
        <dbReference type="ChEBI" id="CHEBI:78494"/>
        <dbReference type="ChEBI" id="CHEBI:456215"/>
        <dbReference type="EC" id="6.1.1.4"/>
    </reaction>
</comment>
<comment type="subcellular location">
    <subcellularLocation>
        <location evidence="1">Cytoplasm</location>
    </subcellularLocation>
</comment>
<comment type="similarity">
    <text evidence="1">Belongs to the class-I aminoacyl-tRNA synthetase family.</text>
</comment>
<protein>
    <recommendedName>
        <fullName evidence="1">Leucine--tRNA ligase</fullName>
        <ecNumber evidence="1">6.1.1.4</ecNumber>
    </recommendedName>
    <alternativeName>
        <fullName evidence="1">Leucyl-tRNA synthetase</fullName>
        <shortName evidence="1">LeuRS</shortName>
    </alternativeName>
</protein>
<name>SYL_MYCBO</name>
<dbReference type="EC" id="6.1.1.4" evidence="1"/>
<dbReference type="EMBL" id="LT708304">
    <property type="protein sequence ID" value="SIT98402.1"/>
    <property type="molecule type" value="Genomic_DNA"/>
</dbReference>
<dbReference type="RefSeq" id="NP_853711.1">
    <property type="nucleotide sequence ID" value="NC_002945.3"/>
</dbReference>
<dbReference type="RefSeq" id="WP_003900794.1">
    <property type="nucleotide sequence ID" value="NC_002945.4"/>
</dbReference>
<dbReference type="SMR" id="P67511"/>
<dbReference type="GeneID" id="45424000"/>
<dbReference type="KEGG" id="mbo:BQ2027_MB0042"/>
<dbReference type="PATRIC" id="fig|233413.5.peg.48"/>
<dbReference type="Proteomes" id="UP000001419">
    <property type="component" value="Chromosome"/>
</dbReference>
<dbReference type="GO" id="GO:0005829">
    <property type="term" value="C:cytosol"/>
    <property type="evidence" value="ECO:0007669"/>
    <property type="project" value="TreeGrafter"/>
</dbReference>
<dbReference type="GO" id="GO:0002161">
    <property type="term" value="F:aminoacyl-tRNA deacylase activity"/>
    <property type="evidence" value="ECO:0007669"/>
    <property type="project" value="InterPro"/>
</dbReference>
<dbReference type="GO" id="GO:0005524">
    <property type="term" value="F:ATP binding"/>
    <property type="evidence" value="ECO:0007669"/>
    <property type="project" value="UniProtKB-UniRule"/>
</dbReference>
<dbReference type="GO" id="GO:0004823">
    <property type="term" value="F:leucine-tRNA ligase activity"/>
    <property type="evidence" value="ECO:0007669"/>
    <property type="project" value="UniProtKB-UniRule"/>
</dbReference>
<dbReference type="GO" id="GO:0006429">
    <property type="term" value="P:leucyl-tRNA aminoacylation"/>
    <property type="evidence" value="ECO:0007669"/>
    <property type="project" value="UniProtKB-UniRule"/>
</dbReference>
<dbReference type="CDD" id="cd07958">
    <property type="entry name" value="Anticodon_Ia_Leu_BEm"/>
    <property type="match status" value="1"/>
</dbReference>
<dbReference type="FunFam" id="3.40.50.620:FF:000060">
    <property type="entry name" value="Leucine--tRNA ligase"/>
    <property type="match status" value="1"/>
</dbReference>
<dbReference type="FunFam" id="3.40.50.620:FF:000087">
    <property type="entry name" value="Leucine--tRNA ligase"/>
    <property type="match status" value="1"/>
</dbReference>
<dbReference type="FunFam" id="3.40.50.620:FF:000239">
    <property type="entry name" value="Leucine--tRNA ligase"/>
    <property type="match status" value="1"/>
</dbReference>
<dbReference type="FunFam" id="3.90.740.10:FF:000017">
    <property type="entry name" value="Leucine--tRNA ligase"/>
    <property type="match status" value="1"/>
</dbReference>
<dbReference type="FunFam" id="1.10.730.10:FF:000011">
    <property type="entry name" value="Leucine--tRNA ligase chloroplastic/mitochondrial"/>
    <property type="match status" value="1"/>
</dbReference>
<dbReference type="Gene3D" id="3.40.50.620">
    <property type="entry name" value="HUPs"/>
    <property type="match status" value="3"/>
</dbReference>
<dbReference type="Gene3D" id="1.10.730.10">
    <property type="entry name" value="Isoleucyl-tRNA Synthetase, Domain 1"/>
    <property type="match status" value="1"/>
</dbReference>
<dbReference type="Gene3D" id="3.90.740.10">
    <property type="entry name" value="Valyl/Leucyl/Isoleucyl-tRNA synthetase, editing domain"/>
    <property type="match status" value="1"/>
</dbReference>
<dbReference type="HAMAP" id="MF_00049_B">
    <property type="entry name" value="Leu_tRNA_synth_B"/>
    <property type="match status" value="1"/>
</dbReference>
<dbReference type="InterPro" id="IPR001412">
    <property type="entry name" value="aa-tRNA-synth_I_CS"/>
</dbReference>
<dbReference type="InterPro" id="IPR002302">
    <property type="entry name" value="Leu-tRNA-ligase"/>
</dbReference>
<dbReference type="InterPro" id="IPR025709">
    <property type="entry name" value="Leu_tRNA-synth_edit"/>
</dbReference>
<dbReference type="InterPro" id="IPR013155">
    <property type="entry name" value="M/V/L/I-tRNA-synth_anticd-bd"/>
</dbReference>
<dbReference type="InterPro" id="IPR015413">
    <property type="entry name" value="Methionyl/Leucyl_tRNA_Synth"/>
</dbReference>
<dbReference type="InterPro" id="IPR014729">
    <property type="entry name" value="Rossmann-like_a/b/a_fold"/>
</dbReference>
<dbReference type="InterPro" id="IPR009080">
    <property type="entry name" value="tRNAsynth_Ia_anticodon-bd"/>
</dbReference>
<dbReference type="InterPro" id="IPR009008">
    <property type="entry name" value="Val/Leu/Ile-tRNA-synth_edit"/>
</dbReference>
<dbReference type="NCBIfam" id="TIGR00396">
    <property type="entry name" value="leuS_bact"/>
    <property type="match status" value="1"/>
</dbReference>
<dbReference type="PANTHER" id="PTHR43740:SF2">
    <property type="entry name" value="LEUCINE--TRNA LIGASE, MITOCHONDRIAL"/>
    <property type="match status" value="1"/>
</dbReference>
<dbReference type="PANTHER" id="PTHR43740">
    <property type="entry name" value="LEUCYL-TRNA SYNTHETASE"/>
    <property type="match status" value="1"/>
</dbReference>
<dbReference type="Pfam" id="PF08264">
    <property type="entry name" value="Anticodon_1"/>
    <property type="match status" value="1"/>
</dbReference>
<dbReference type="Pfam" id="PF13603">
    <property type="entry name" value="tRNA-synt_1_2"/>
    <property type="match status" value="1"/>
</dbReference>
<dbReference type="Pfam" id="PF09334">
    <property type="entry name" value="tRNA-synt_1g"/>
    <property type="match status" value="1"/>
</dbReference>
<dbReference type="PRINTS" id="PR00985">
    <property type="entry name" value="TRNASYNTHLEU"/>
</dbReference>
<dbReference type="SUPFAM" id="SSF47323">
    <property type="entry name" value="Anticodon-binding domain of a subclass of class I aminoacyl-tRNA synthetases"/>
    <property type="match status" value="1"/>
</dbReference>
<dbReference type="SUPFAM" id="SSF52374">
    <property type="entry name" value="Nucleotidylyl transferase"/>
    <property type="match status" value="1"/>
</dbReference>
<dbReference type="SUPFAM" id="SSF50677">
    <property type="entry name" value="ValRS/IleRS/LeuRS editing domain"/>
    <property type="match status" value="1"/>
</dbReference>
<dbReference type="PROSITE" id="PS00178">
    <property type="entry name" value="AA_TRNA_LIGASE_I"/>
    <property type="match status" value="1"/>
</dbReference>
<reference key="1">
    <citation type="journal article" date="2003" name="Proc. Natl. Acad. Sci. U.S.A.">
        <title>The complete genome sequence of Mycobacterium bovis.</title>
        <authorList>
            <person name="Garnier T."/>
            <person name="Eiglmeier K."/>
            <person name="Camus J.-C."/>
            <person name="Medina N."/>
            <person name="Mansoor H."/>
            <person name="Pryor M."/>
            <person name="Duthoy S."/>
            <person name="Grondin S."/>
            <person name="Lacroix C."/>
            <person name="Monsempe C."/>
            <person name="Simon S."/>
            <person name="Harris B."/>
            <person name="Atkin R."/>
            <person name="Doggett J."/>
            <person name="Mayes R."/>
            <person name="Keating L."/>
            <person name="Wheeler P.R."/>
            <person name="Parkhill J."/>
            <person name="Barrell B.G."/>
            <person name="Cole S.T."/>
            <person name="Gordon S.V."/>
            <person name="Hewinson R.G."/>
        </authorList>
    </citation>
    <scope>NUCLEOTIDE SEQUENCE [LARGE SCALE GENOMIC DNA]</scope>
    <source>
        <strain>ATCC BAA-935 / AF2122/97</strain>
    </source>
</reference>
<reference key="2">
    <citation type="journal article" date="2017" name="Genome Announc.">
        <title>Updated reference genome sequence and annotation of Mycobacterium bovis AF2122/97.</title>
        <authorList>
            <person name="Malone K.M."/>
            <person name="Farrell D."/>
            <person name="Stuber T.P."/>
            <person name="Schubert O.T."/>
            <person name="Aebersold R."/>
            <person name="Robbe-Austerman S."/>
            <person name="Gordon S.V."/>
        </authorList>
    </citation>
    <scope>NUCLEOTIDE SEQUENCE [LARGE SCALE GENOMIC DNA]</scope>
    <scope>GENOME REANNOTATION</scope>
    <source>
        <strain>ATCC BAA-935 / AF2122/97</strain>
    </source>
</reference>
<sequence length="969" mass="107595">MTESPTAGPGGVPRADDADSDVPRYRYTAELAARLERTWQENWARLGTFNVPNPVGSLAPPDGAAVPDDKLFVQDMFPYPSGEGLHVGHPLGYIATDVYARYFRMVGRNVLHALGFDAFGLPAEQYAVQTGTHPRTRTEANVVNFRRQLGRLGFGHDSRRSFSTTDVDFYRWTQWIFLQIYNAWFDTTANKARPISELVAEFESGARCLDGGRDWAKLTAGERADVIDEYRLVYRADSLVNWCPGLGTVLANEEVTADGRSDRGNFPVFRKRLRQWMMRITAYADRLLDDLDVLDWPEQVKTMQRNWIGRSTGAVALFSARAASDDGFEVDIEVFTTRPDTLFGATYLVLAPEHDLVDELVAASWPAGVNPLWTYGGGTPGEAIAAYRRAIAAKSDLERQESREKTGVFLGSYAINPANGEPVPIFIADYVLAGYGTGAIMAVPGHDQRDWDFARAFGLPIVEVIAGGNISESAYTGDGILVNSDYLNGMSVPAAKRAIVDRLESAGRGRARIEFKLRDWLFARQRYWGEPFPIVYDSDGRPHALDEAALPVELPDVPDYSPVLFDPDDADSEPSPPLAKATEWVHVDLDLGDGLKPYSRDTNVMPQWAGSSWYELRYTDPHNSERFCAKENEAYWMGPRPAEHGPDDPGGVDLYVGGAEHAVLHLLYSRFWHKVLYDLGHVSSREPYRRLVNQGYIQAYAYTDARGSYVPAEQVIERGDRFVYPGPDGEVEVFQEFGKIGKSLKNSVSPDEICDAYGADTLRVYEMSMGPLEASRPWATKDVVGAYRFLQRVWRLVVDEHTGETRVADGVELDIDTLRALHRTIVGVSEDFAALRNNTATAKLIEYTNHLTKKHRDAVPRAAVEPLVQMLAPLAPHIAEELWLRLGNTTSLAHGPFPKADAAYLVDETVEYPVQVNGKVRGRVVVAADTDEETLKAAVLTDEKVQAFLAGATPRKVIVVAGRLVNLVI</sequence>
<proteinExistence type="inferred from homology"/>
<accession>P67511</accession>
<accession>A0A1R3XU37</accession>
<accession>P71698</accession>
<accession>X2BDV0</accession>
<evidence type="ECO:0000255" key="1">
    <source>
        <dbReference type="HAMAP-Rule" id="MF_00049"/>
    </source>
</evidence>